<dbReference type="EMBL" id="CP000127">
    <property type="protein sequence ID" value="ABA56766.1"/>
    <property type="molecule type" value="Genomic_DNA"/>
</dbReference>
<dbReference type="SMR" id="Q3JEI0"/>
<dbReference type="FunCoup" id="Q3JEI0">
    <property type="interactions" value="186"/>
</dbReference>
<dbReference type="STRING" id="323261.Noc_0236"/>
<dbReference type="KEGG" id="noc:Noc_0236"/>
<dbReference type="eggNOG" id="COG2003">
    <property type="taxonomic scope" value="Bacteria"/>
</dbReference>
<dbReference type="HOGENOM" id="CLU_073529_0_1_6"/>
<dbReference type="InParanoid" id="Q3JEI0"/>
<dbReference type="Proteomes" id="UP000006838">
    <property type="component" value="Chromosome"/>
</dbReference>
<dbReference type="GO" id="GO:0046872">
    <property type="term" value="F:metal ion binding"/>
    <property type="evidence" value="ECO:0007669"/>
    <property type="project" value="UniProtKB-KW"/>
</dbReference>
<dbReference type="GO" id="GO:0008237">
    <property type="term" value="F:metallopeptidase activity"/>
    <property type="evidence" value="ECO:0007669"/>
    <property type="project" value="UniProtKB-KW"/>
</dbReference>
<dbReference type="GO" id="GO:0006508">
    <property type="term" value="P:proteolysis"/>
    <property type="evidence" value="ECO:0007669"/>
    <property type="project" value="UniProtKB-KW"/>
</dbReference>
<dbReference type="CDD" id="cd08071">
    <property type="entry name" value="MPN_DUF2466"/>
    <property type="match status" value="1"/>
</dbReference>
<dbReference type="FunFam" id="3.40.140.10:FF:000032">
    <property type="entry name" value="DNA repair protein RadC"/>
    <property type="match status" value="1"/>
</dbReference>
<dbReference type="Gene3D" id="3.40.140.10">
    <property type="entry name" value="Cytidine Deaminase, domain 2"/>
    <property type="match status" value="1"/>
</dbReference>
<dbReference type="InterPro" id="IPR037518">
    <property type="entry name" value="MPN"/>
</dbReference>
<dbReference type="InterPro" id="IPR025657">
    <property type="entry name" value="RadC_JAB"/>
</dbReference>
<dbReference type="InterPro" id="IPR010994">
    <property type="entry name" value="RuvA_2-like"/>
</dbReference>
<dbReference type="InterPro" id="IPR001405">
    <property type="entry name" value="UPF0758"/>
</dbReference>
<dbReference type="InterPro" id="IPR020891">
    <property type="entry name" value="UPF0758_CS"/>
</dbReference>
<dbReference type="InterPro" id="IPR046778">
    <property type="entry name" value="UPF0758_N"/>
</dbReference>
<dbReference type="NCBIfam" id="NF000642">
    <property type="entry name" value="PRK00024.1"/>
    <property type="match status" value="1"/>
</dbReference>
<dbReference type="NCBIfam" id="TIGR00608">
    <property type="entry name" value="radc"/>
    <property type="match status" value="1"/>
</dbReference>
<dbReference type="PANTHER" id="PTHR30471">
    <property type="entry name" value="DNA REPAIR PROTEIN RADC"/>
    <property type="match status" value="1"/>
</dbReference>
<dbReference type="PANTHER" id="PTHR30471:SF3">
    <property type="entry name" value="UPF0758 PROTEIN YEES-RELATED"/>
    <property type="match status" value="1"/>
</dbReference>
<dbReference type="Pfam" id="PF04002">
    <property type="entry name" value="RadC"/>
    <property type="match status" value="1"/>
</dbReference>
<dbReference type="Pfam" id="PF20582">
    <property type="entry name" value="UPF0758_N"/>
    <property type="match status" value="1"/>
</dbReference>
<dbReference type="SUPFAM" id="SSF102712">
    <property type="entry name" value="JAB1/MPN domain"/>
    <property type="match status" value="1"/>
</dbReference>
<dbReference type="SUPFAM" id="SSF47781">
    <property type="entry name" value="RuvA domain 2-like"/>
    <property type="match status" value="1"/>
</dbReference>
<dbReference type="PROSITE" id="PS50249">
    <property type="entry name" value="MPN"/>
    <property type="match status" value="1"/>
</dbReference>
<dbReference type="PROSITE" id="PS01302">
    <property type="entry name" value="UPF0758"/>
    <property type="match status" value="1"/>
</dbReference>
<accession>Q3JEI0</accession>
<keyword id="KW-0378">Hydrolase</keyword>
<keyword id="KW-0479">Metal-binding</keyword>
<keyword id="KW-0482">Metalloprotease</keyword>
<keyword id="KW-0645">Protease</keyword>
<keyword id="KW-1185">Reference proteome</keyword>
<keyword id="KW-0862">Zinc</keyword>
<name>Y236_NITOC</name>
<proteinExistence type="inferred from homology"/>
<comment type="similarity">
    <text evidence="2">Belongs to the UPF0758 family.</text>
</comment>
<evidence type="ECO:0000255" key="1">
    <source>
        <dbReference type="PROSITE-ProRule" id="PRU01182"/>
    </source>
</evidence>
<evidence type="ECO:0000305" key="2"/>
<organism>
    <name type="scientific">Nitrosococcus oceani (strain ATCC 19707 / BCRC 17464 / JCM 30415 / NCIMB 11848 / C-107)</name>
    <dbReference type="NCBI Taxonomy" id="323261"/>
    <lineage>
        <taxon>Bacteria</taxon>
        <taxon>Pseudomonadati</taxon>
        <taxon>Pseudomonadota</taxon>
        <taxon>Gammaproteobacteria</taxon>
        <taxon>Chromatiales</taxon>
        <taxon>Chromatiaceae</taxon>
        <taxon>Nitrosococcus</taxon>
    </lineage>
</organism>
<protein>
    <recommendedName>
        <fullName>UPF0758 protein Noc_0236</fullName>
    </recommendedName>
</protein>
<reference key="1">
    <citation type="journal article" date="2006" name="Appl. Environ. Microbiol.">
        <title>Complete genome sequence of the marine, chemolithoautotrophic, ammonia-oxidizing bacterium Nitrosococcus oceani ATCC 19707.</title>
        <authorList>
            <person name="Klotz M.G."/>
            <person name="Arp D.J."/>
            <person name="Chain P.S.G."/>
            <person name="El-Sheikh A.F."/>
            <person name="Hauser L.J."/>
            <person name="Hommes N.G."/>
            <person name="Larimer F.W."/>
            <person name="Malfatti S.A."/>
            <person name="Norton J.M."/>
            <person name="Poret-Peterson A.T."/>
            <person name="Vergez L.M."/>
            <person name="Ward B.B."/>
        </authorList>
    </citation>
    <scope>NUCLEOTIDE SEQUENCE [LARGE SCALE GENOMIC DNA]</scope>
    <source>
        <strain>ATCC 19707 / BCRC 17464 / JCM 30415 / NCIMB 11848 / C-107</strain>
    </source>
</reference>
<gene>
    <name type="ordered locus">Noc_0236</name>
</gene>
<sequence length="224" mass="24917">MAITDWPVHERPREKLLQRGPNALSDAELLAIFLRTGVAGKTAVDLARELLESFGSLRALLEADLKQFCHAPGLGIAKYTQLQACLEMGRRHLEDTLKRGDVLTDPQTTQRYLVARLRAYPFEVFSCLFLDNRHRVLAFEELFRGTIDGASVHPREVLKRALAHNAAAVILAHNHPSGVAEPSRADECITQRLKEALALVDIRVLDHIIVGDGETLSFAERGLL</sequence>
<feature type="chain" id="PRO_1000001672" description="UPF0758 protein Noc_0236">
    <location>
        <begin position="1"/>
        <end position="224"/>
    </location>
</feature>
<feature type="domain" description="MPN" evidence="1">
    <location>
        <begin position="102"/>
        <end position="224"/>
    </location>
</feature>
<feature type="short sequence motif" description="JAMM motif" evidence="1">
    <location>
        <begin position="173"/>
        <end position="186"/>
    </location>
</feature>
<feature type="binding site" evidence="1">
    <location>
        <position position="173"/>
    </location>
    <ligand>
        <name>Zn(2+)</name>
        <dbReference type="ChEBI" id="CHEBI:29105"/>
        <note>catalytic</note>
    </ligand>
</feature>
<feature type="binding site" evidence="1">
    <location>
        <position position="175"/>
    </location>
    <ligand>
        <name>Zn(2+)</name>
        <dbReference type="ChEBI" id="CHEBI:29105"/>
        <note>catalytic</note>
    </ligand>
</feature>
<feature type="binding site" evidence="1">
    <location>
        <position position="186"/>
    </location>
    <ligand>
        <name>Zn(2+)</name>
        <dbReference type="ChEBI" id="CHEBI:29105"/>
        <note>catalytic</note>
    </ligand>
</feature>